<organism>
    <name type="scientific">Acinetobacter baumannii (strain ATCC 17978 / DSM 105126 / CIP 53.77 / LMG 1025 / NCDC KC755 / 5377)</name>
    <dbReference type="NCBI Taxonomy" id="400667"/>
    <lineage>
        <taxon>Bacteria</taxon>
        <taxon>Pseudomonadati</taxon>
        <taxon>Pseudomonadota</taxon>
        <taxon>Gammaproteobacteria</taxon>
        <taxon>Moraxellales</taxon>
        <taxon>Moraxellaceae</taxon>
        <taxon>Acinetobacter</taxon>
        <taxon>Acinetobacter calcoaceticus/baumannii complex</taxon>
    </lineage>
</organism>
<proteinExistence type="inferred from homology"/>
<name>LGT_ACIBT</name>
<dbReference type="EC" id="2.5.1.145" evidence="1"/>
<dbReference type="EMBL" id="CP000521">
    <property type="protein sequence ID" value="ABO10915.2"/>
    <property type="molecule type" value="Genomic_DNA"/>
</dbReference>
<dbReference type="RefSeq" id="WP_000959085.1">
    <property type="nucleotide sequence ID" value="NZ_CP053098.1"/>
</dbReference>
<dbReference type="SMR" id="A3M1X1"/>
<dbReference type="KEGG" id="acb:A1S_0460"/>
<dbReference type="HOGENOM" id="CLU_013386_1_0_6"/>
<dbReference type="UniPathway" id="UPA00664"/>
<dbReference type="GO" id="GO:0005886">
    <property type="term" value="C:plasma membrane"/>
    <property type="evidence" value="ECO:0007669"/>
    <property type="project" value="UniProtKB-SubCell"/>
</dbReference>
<dbReference type="GO" id="GO:0008961">
    <property type="term" value="F:phosphatidylglycerol-prolipoprotein diacylglyceryl transferase activity"/>
    <property type="evidence" value="ECO:0007669"/>
    <property type="project" value="UniProtKB-UniRule"/>
</dbReference>
<dbReference type="GO" id="GO:0042158">
    <property type="term" value="P:lipoprotein biosynthetic process"/>
    <property type="evidence" value="ECO:0007669"/>
    <property type="project" value="UniProtKB-UniRule"/>
</dbReference>
<dbReference type="HAMAP" id="MF_01147">
    <property type="entry name" value="Lgt"/>
    <property type="match status" value="1"/>
</dbReference>
<dbReference type="InterPro" id="IPR001640">
    <property type="entry name" value="Lgt"/>
</dbReference>
<dbReference type="NCBIfam" id="TIGR00544">
    <property type="entry name" value="lgt"/>
    <property type="match status" value="1"/>
</dbReference>
<dbReference type="PANTHER" id="PTHR30589:SF0">
    <property type="entry name" value="PHOSPHATIDYLGLYCEROL--PROLIPOPROTEIN DIACYLGLYCERYL TRANSFERASE"/>
    <property type="match status" value="1"/>
</dbReference>
<dbReference type="PANTHER" id="PTHR30589">
    <property type="entry name" value="PROLIPOPROTEIN DIACYLGLYCERYL TRANSFERASE"/>
    <property type="match status" value="1"/>
</dbReference>
<dbReference type="Pfam" id="PF01790">
    <property type="entry name" value="LGT"/>
    <property type="match status" value="1"/>
</dbReference>
<dbReference type="PROSITE" id="PS01311">
    <property type="entry name" value="LGT"/>
    <property type="match status" value="1"/>
</dbReference>
<feature type="chain" id="PRO_1000137392" description="Phosphatidylglycerol--prolipoprotein diacylglyceryl transferase">
    <location>
        <begin position="1"/>
        <end position="272"/>
    </location>
</feature>
<feature type="transmembrane region" description="Helical" evidence="1">
    <location>
        <begin position="17"/>
        <end position="37"/>
    </location>
</feature>
<feature type="transmembrane region" description="Helical" evidence="1">
    <location>
        <begin position="55"/>
        <end position="75"/>
    </location>
</feature>
<feature type="transmembrane region" description="Helical" evidence="1">
    <location>
        <begin position="90"/>
        <end position="110"/>
    </location>
</feature>
<feature type="transmembrane region" description="Helical" evidence="1">
    <location>
        <begin position="125"/>
        <end position="145"/>
    </location>
</feature>
<feature type="transmembrane region" description="Helical" evidence="1">
    <location>
        <begin position="174"/>
        <end position="194"/>
    </location>
</feature>
<feature type="transmembrane region" description="Helical" evidence="1">
    <location>
        <begin position="202"/>
        <end position="222"/>
    </location>
</feature>
<feature type="transmembrane region" description="Helical" evidence="1">
    <location>
        <begin position="230"/>
        <end position="250"/>
    </location>
</feature>
<feature type="binding site" evidence="1">
    <location>
        <position position="138"/>
    </location>
    <ligand>
        <name>a 1,2-diacyl-sn-glycero-3-phospho-(1'-sn-glycerol)</name>
        <dbReference type="ChEBI" id="CHEBI:64716"/>
    </ligand>
</feature>
<gene>
    <name evidence="1" type="primary">lgt</name>
    <name type="ordered locus">A1S_0460</name>
</gene>
<keyword id="KW-0997">Cell inner membrane</keyword>
<keyword id="KW-1003">Cell membrane</keyword>
<keyword id="KW-0472">Membrane</keyword>
<keyword id="KW-0808">Transferase</keyword>
<keyword id="KW-0812">Transmembrane</keyword>
<keyword id="KW-1133">Transmembrane helix</keyword>
<accession>A3M1X1</accession>
<evidence type="ECO:0000255" key="1">
    <source>
        <dbReference type="HAMAP-Rule" id="MF_01147"/>
    </source>
</evidence>
<sequence>MLTYPNIDPVAIHLGPLQVHWYGLMYLLAFLCAWGLASYRAKQRDGWTSDMVSDLVFYGALGVVLGGRIGYVLFYEFDKFLENPIWLFQVWTGGMSFHGGFLGVMIAMLFWCKKYQKTWFQTLDFVAPCVPTGLMFGRIGNFIGGELYGRAVTDPNYPFGMIFPTDPLHLVRHPSQIYQALCEGLLLFIILWWFSSKPRPRMAVSALFLMGYGVARFVMEFFRQPDADQGFILFGWMTKGQILTVPMLLIGLWMMWYAYQKKIYDWGPQKNS</sequence>
<protein>
    <recommendedName>
        <fullName evidence="1">Phosphatidylglycerol--prolipoprotein diacylglyceryl transferase</fullName>
        <ecNumber evidence="1">2.5.1.145</ecNumber>
    </recommendedName>
</protein>
<comment type="function">
    <text evidence="1">Catalyzes the transfer of the diacylglyceryl group from phosphatidylglycerol to the sulfhydryl group of the N-terminal cysteine of a prolipoprotein, the first step in the formation of mature lipoproteins.</text>
</comment>
<comment type="catalytic activity">
    <reaction evidence="1">
        <text>L-cysteinyl-[prolipoprotein] + a 1,2-diacyl-sn-glycero-3-phospho-(1'-sn-glycerol) = an S-1,2-diacyl-sn-glyceryl-L-cysteinyl-[prolipoprotein] + sn-glycerol 1-phosphate + H(+)</text>
        <dbReference type="Rhea" id="RHEA:56712"/>
        <dbReference type="Rhea" id="RHEA-COMP:14679"/>
        <dbReference type="Rhea" id="RHEA-COMP:14680"/>
        <dbReference type="ChEBI" id="CHEBI:15378"/>
        <dbReference type="ChEBI" id="CHEBI:29950"/>
        <dbReference type="ChEBI" id="CHEBI:57685"/>
        <dbReference type="ChEBI" id="CHEBI:64716"/>
        <dbReference type="ChEBI" id="CHEBI:140658"/>
        <dbReference type="EC" id="2.5.1.145"/>
    </reaction>
</comment>
<comment type="pathway">
    <text evidence="1">Protein modification; lipoprotein biosynthesis (diacylglyceryl transfer).</text>
</comment>
<comment type="subcellular location">
    <subcellularLocation>
        <location evidence="1">Cell inner membrane</location>
        <topology evidence="1">Multi-pass membrane protein</topology>
    </subcellularLocation>
</comment>
<comment type="similarity">
    <text evidence="1">Belongs to the Lgt family.</text>
</comment>
<reference key="1">
    <citation type="journal article" date="2007" name="Genes Dev.">
        <title>New insights into Acinetobacter baumannii pathogenesis revealed by high-density pyrosequencing and transposon mutagenesis.</title>
        <authorList>
            <person name="Smith M.G."/>
            <person name="Gianoulis T.A."/>
            <person name="Pukatzki S."/>
            <person name="Mekalanos J.J."/>
            <person name="Ornston L.N."/>
            <person name="Gerstein M."/>
            <person name="Snyder M."/>
        </authorList>
    </citation>
    <scope>NUCLEOTIDE SEQUENCE [LARGE SCALE GENOMIC DNA]</scope>
    <source>
        <strain>ATCC 17978 / DSM 105126 / CIP 53.77 / LMG 1025 / NCDC KC755 / 5377</strain>
    </source>
</reference>